<evidence type="ECO:0000255" key="1">
    <source>
        <dbReference type="HAMAP-Rule" id="MF_01685"/>
    </source>
</evidence>
<organism>
    <name type="scientific">Bacillus cytotoxicus (strain DSM 22905 / CIP 110041 / 391-98 / NVH 391-98)</name>
    <dbReference type="NCBI Taxonomy" id="315749"/>
    <lineage>
        <taxon>Bacteria</taxon>
        <taxon>Bacillati</taxon>
        <taxon>Bacillota</taxon>
        <taxon>Bacilli</taxon>
        <taxon>Bacillales</taxon>
        <taxon>Bacillaceae</taxon>
        <taxon>Bacillus</taxon>
        <taxon>Bacillus cereus group</taxon>
    </lineage>
</organism>
<proteinExistence type="inferred from homology"/>
<comment type="catalytic activity">
    <reaction evidence="1">
        <text>2 reduced [2Fe-2S]-[ferredoxin] + NADP(+) + H(+) = 2 oxidized [2Fe-2S]-[ferredoxin] + NADPH</text>
        <dbReference type="Rhea" id="RHEA:20125"/>
        <dbReference type="Rhea" id="RHEA-COMP:10000"/>
        <dbReference type="Rhea" id="RHEA-COMP:10001"/>
        <dbReference type="ChEBI" id="CHEBI:15378"/>
        <dbReference type="ChEBI" id="CHEBI:33737"/>
        <dbReference type="ChEBI" id="CHEBI:33738"/>
        <dbReference type="ChEBI" id="CHEBI:57783"/>
        <dbReference type="ChEBI" id="CHEBI:58349"/>
        <dbReference type="EC" id="1.18.1.2"/>
    </reaction>
</comment>
<comment type="cofactor">
    <cofactor evidence="1">
        <name>FAD</name>
        <dbReference type="ChEBI" id="CHEBI:57692"/>
    </cofactor>
    <text evidence="1">Binds 1 FAD per subunit.</text>
</comment>
<comment type="subunit">
    <text evidence="1">Homodimer.</text>
</comment>
<comment type="similarity">
    <text evidence="1">Belongs to the ferredoxin--NADP reductase type 2 family.</text>
</comment>
<dbReference type="EC" id="1.18.1.2" evidence="1"/>
<dbReference type="EMBL" id="CP000764">
    <property type="protein sequence ID" value="ABS23743.1"/>
    <property type="molecule type" value="Genomic_DNA"/>
</dbReference>
<dbReference type="RefSeq" id="WP_012095993.1">
    <property type="nucleotide sequence ID" value="NC_009674.1"/>
</dbReference>
<dbReference type="SMR" id="A7GUD5"/>
<dbReference type="STRING" id="315749.Bcer98_3539"/>
<dbReference type="GeneID" id="33898794"/>
<dbReference type="KEGG" id="bcy:Bcer98_3539"/>
<dbReference type="eggNOG" id="COG0492">
    <property type="taxonomic scope" value="Bacteria"/>
</dbReference>
<dbReference type="HOGENOM" id="CLU_031864_5_5_9"/>
<dbReference type="OrthoDB" id="9806179at2"/>
<dbReference type="Proteomes" id="UP000002300">
    <property type="component" value="Chromosome"/>
</dbReference>
<dbReference type="GO" id="GO:0004324">
    <property type="term" value="F:ferredoxin-NADP+ reductase activity"/>
    <property type="evidence" value="ECO:0007669"/>
    <property type="project" value="UniProtKB-UniRule"/>
</dbReference>
<dbReference type="GO" id="GO:0050660">
    <property type="term" value="F:flavin adenine dinucleotide binding"/>
    <property type="evidence" value="ECO:0007669"/>
    <property type="project" value="UniProtKB-UniRule"/>
</dbReference>
<dbReference type="GO" id="GO:0050661">
    <property type="term" value="F:NADP binding"/>
    <property type="evidence" value="ECO:0007669"/>
    <property type="project" value="UniProtKB-UniRule"/>
</dbReference>
<dbReference type="Gene3D" id="3.50.50.60">
    <property type="entry name" value="FAD/NAD(P)-binding domain"/>
    <property type="match status" value="2"/>
</dbReference>
<dbReference type="HAMAP" id="MF_01685">
    <property type="entry name" value="FENR2"/>
    <property type="match status" value="1"/>
</dbReference>
<dbReference type="InterPro" id="IPR036188">
    <property type="entry name" value="FAD/NAD-bd_sf"/>
</dbReference>
<dbReference type="InterPro" id="IPR023753">
    <property type="entry name" value="FAD/NAD-binding_dom"/>
</dbReference>
<dbReference type="InterPro" id="IPR022890">
    <property type="entry name" value="Fd--NADP_Rdtase_type_2"/>
</dbReference>
<dbReference type="InterPro" id="IPR050097">
    <property type="entry name" value="Ferredoxin-NADP_redctase_2"/>
</dbReference>
<dbReference type="PANTHER" id="PTHR48105">
    <property type="entry name" value="THIOREDOXIN REDUCTASE 1-RELATED-RELATED"/>
    <property type="match status" value="1"/>
</dbReference>
<dbReference type="Pfam" id="PF07992">
    <property type="entry name" value="Pyr_redox_2"/>
    <property type="match status" value="1"/>
</dbReference>
<dbReference type="PRINTS" id="PR00368">
    <property type="entry name" value="FADPNR"/>
</dbReference>
<dbReference type="PRINTS" id="PR00469">
    <property type="entry name" value="PNDRDTASEII"/>
</dbReference>
<dbReference type="SUPFAM" id="SSF51905">
    <property type="entry name" value="FAD/NAD(P)-binding domain"/>
    <property type="match status" value="1"/>
</dbReference>
<gene>
    <name type="ordered locus">Bcer98_3539</name>
</gene>
<protein>
    <recommendedName>
        <fullName evidence="1">Ferredoxin--NADP reductase 2</fullName>
        <shortName evidence="1">FNR 2</shortName>
        <shortName evidence="1">Fd-NADP(+) reductase 2</shortName>
        <ecNumber evidence="1">1.18.1.2</ecNumber>
    </recommendedName>
</protein>
<reference key="1">
    <citation type="journal article" date="2008" name="Chem. Biol. Interact.">
        <title>Extending the Bacillus cereus group genomics to putative food-borne pathogens of different toxicity.</title>
        <authorList>
            <person name="Lapidus A."/>
            <person name="Goltsman E."/>
            <person name="Auger S."/>
            <person name="Galleron N."/>
            <person name="Segurens B."/>
            <person name="Dossat C."/>
            <person name="Land M.L."/>
            <person name="Broussolle V."/>
            <person name="Brillard J."/>
            <person name="Guinebretiere M.-H."/>
            <person name="Sanchis V."/>
            <person name="Nguen-the C."/>
            <person name="Lereclus D."/>
            <person name="Richardson P."/>
            <person name="Wincker P."/>
            <person name="Weissenbach J."/>
            <person name="Ehrlich S.D."/>
            <person name="Sorokin A."/>
        </authorList>
    </citation>
    <scope>NUCLEOTIDE SEQUENCE [LARGE SCALE GENOMIC DNA]</scope>
    <source>
        <strain>DSM 22905 / CIP 110041 / 391-98 / NVH 391-98</strain>
    </source>
</reference>
<keyword id="KW-0274">FAD</keyword>
<keyword id="KW-0285">Flavoprotein</keyword>
<keyword id="KW-0521">NADP</keyword>
<keyword id="KW-0560">Oxidoreductase</keyword>
<accession>A7GUD5</accession>
<feature type="chain" id="PRO_0000364793" description="Ferredoxin--NADP reductase 2">
    <location>
        <begin position="1"/>
        <end position="329"/>
    </location>
</feature>
<feature type="binding site" evidence="1">
    <location>
        <position position="18"/>
    </location>
    <ligand>
        <name>FAD</name>
        <dbReference type="ChEBI" id="CHEBI:57692"/>
    </ligand>
</feature>
<feature type="binding site" evidence="1">
    <location>
        <position position="37"/>
    </location>
    <ligand>
        <name>FAD</name>
        <dbReference type="ChEBI" id="CHEBI:57692"/>
    </ligand>
</feature>
<feature type="binding site" evidence="1">
    <location>
        <position position="45"/>
    </location>
    <ligand>
        <name>FAD</name>
        <dbReference type="ChEBI" id="CHEBI:57692"/>
    </ligand>
</feature>
<feature type="binding site" evidence="1">
    <location>
        <position position="50"/>
    </location>
    <ligand>
        <name>FAD</name>
        <dbReference type="ChEBI" id="CHEBI:57692"/>
    </ligand>
</feature>
<feature type="binding site" evidence="1">
    <location>
        <position position="90"/>
    </location>
    <ligand>
        <name>FAD</name>
        <dbReference type="ChEBI" id="CHEBI:57692"/>
    </ligand>
</feature>
<feature type="binding site" evidence="1">
    <location>
        <position position="124"/>
    </location>
    <ligand>
        <name>FAD</name>
        <dbReference type="ChEBI" id="CHEBI:57692"/>
    </ligand>
</feature>
<feature type="binding site" evidence="1">
    <location>
        <position position="285"/>
    </location>
    <ligand>
        <name>FAD</name>
        <dbReference type="ChEBI" id="CHEBI:57692"/>
    </ligand>
</feature>
<feature type="binding site" evidence="1">
    <location>
        <position position="326"/>
    </location>
    <ligand>
        <name>FAD</name>
        <dbReference type="ChEBI" id="CHEBI:57692"/>
    </ligand>
</feature>
<name>FENR2_BACCN</name>
<sequence>MTENQNVYDITIIGGGPTGLFTAFYGGMRQASVKIIESLPQLGGQLSALYPEKYIYDVAGFPKVRAQELVDNLKEQMKKFDPTICLEEAVETLEKQADGVFKLVTNKQTHYSKSVIITAGNGAFQPRRLELDGAQKFEKKNLHYFVDDMNKFARKRVVVFGGGDSAVDWTLMLEPIAEQVTIIHRRDKFRAHEHSVENLINSRADIKTPYVPVELIGEEQIEQVVLQHVKTEEKVVIDVDDVIVNYGFVSSLGPIKNWGLNIQKNSIVVNSKMETNIPGIYAAGDVCTYEGKVKLIACGFGEAPTAVNNAKAYFDPSAKLQPMHSSSMF</sequence>